<keyword id="KW-0067">ATP-binding</keyword>
<keyword id="KW-0460">Magnesium</keyword>
<keyword id="KW-0464">Manganese</keyword>
<keyword id="KW-0479">Metal-binding</keyword>
<keyword id="KW-0547">Nucleotide-binding</keyword>
<keyword id="KW-0548">Nucleotidyltransferase</keyword>
<keyword id="KW-0808">Transferase</keyword>
<organism>
    <name type="scientific">Anoxybacillus flavithermus (strain DSM 21510 / WK1)</name>
    <dbReference type="NCBI Taxonomy" id="491915"/>
    <lineage>
        <taxon>Bacteria</taxon>
        <taxon>Bacillati</taxon>
        <taxon>Bacillota</taxon>
        <taxon>Bacilli</taxon>
        <taxon>Bacillales</taxon>
        <taxon>Anoxybacillaceae</taxon>
        <taxon>Anoxybacillus</taxon>
    </lineage>
</organism>
<accession>B7GIH1</accession>
<dbReference type="EC" id="2.7.7.-" evidence="1"/>
<dbReference type="EC" id="2.7.7.108" evidence="1"/>
<dbReference type="EMBL" id="CP000922">
    <property type="protein sequence ID" value="ACJ32718.1"/>
    <property type="molecule type" value="Genomic_DNA"/>
</dbReference>
<dbReference type="RefSeq" id="WP_012574053.1">
    <property type="nucleotide sequence ID" value="NC_011567.1"/>
</dbReference>
<dbReference type="SMR" id="B7GIH1"/>
<dbReference type="STRING" id="491915.Aflv_0334"/>
<dbReference type="GeneID" id="7036566"/>
<dbReference type="KEGG" id="afl:Aflv_0334"/>
<dbReference type="PATRIC" id="fig|491915.6.peg.342"/>
<dbReference type="eggNOG" id="COG0397">
    <property type="taxonomic scope" value="Bacteria"/>
</dbReference>
<dbReference type="HOGENOM" id="CLU_010245_4_1_9"/>
<dbReference type="Proteomes" id="UP000000742">
    <property type="component" value="Chromosome"/>
</dbReference>
<dbReference type="GO" id="GO:0070733">
    <property type="term" value="F:AMPylase activity"/>
    <property type="evidence" value="ECO:0007669"/>
    <property type="project" value="TreeGrafter"/>
</dbReference>
<dbReference type="GO" id="GO:0005524">
    <property type="term" value="F:ATP binding"/>
    <property type="evidence" value="ECO:0007669"/>
    <property type="project" value="UniProtKB-UniRule"/>
</dbReference>
<dbReference type="GO" id="GO:0000287">
    <property type="term" value="F:magnesium ion binding"/>
    <property type="evidence" value="ECO:0007669"/>
    <property type="project" value="UniProtKB-UniRule"/>
</dbReference>
<dbReference type="HAMAP" id="MF_00692">
    <property type="entry name" value="YdiU_SelO"/>
    <property type="match status" value="1"/>
</dbReference>
<dbReference type="InterPro" id="IPR003846">
    <property type="entry name" value="SelO"/>
</dbReference>
<dbReference type="NCBIfam" id="NF000658">
    <property type="entry name" value="PRK00029.1"/>
    <property type="match status" value="1"/>
</dbReference>
<dbReference type="PANTHER" id="PTHR32057">
    <property type="entry name" value="PROTEIN ADENYLYLTRANSFERASE SELO, MITOCHONDRIAL"/>
    <property type="match status" value="1"/>
</dbReference>
<dbReference type="PANTHER" id="PTHR32057:SF14">
    <property type="entry name" value="PROTEIN ADENYLYLTRANSFERASE SELO, MITOCHONDRIAL"/>
    <property type="match status" value="1"/>
</dbReference>
<dbReference type="Pfam" id="PF02696">
    <property type="entry name" value="SelO"/>
    <property type="match status" value="1"/>
</dbReference>
<comment type="function">
    <text evidence="1">Nucleotidyltransferase involved in the post-translational modification of proteins. It can catalyze the addition of adenosine monophosphate (AMP) or uridine monophosphate (UMP) to a protein, resulting in modifications known as AMPylation and UMPylation.</text>
</comment>
<comment type="catalytic activity">
    <reaction evidence="1">
        <text>L-seryl-[protein] + ATP = 3-O-(5'-adenylyl)-L-seryl-[protein] + diphosphate</text>
        <dbReference type="Rhea" id="RHEA:58120"/>
        <dbReference type="Rhea" id="RHEA-COMP:9863"/>
        <dbReference type="Rhea" id="RHEA-COMP:15073"/>
        <dbReference type="ChEBI" id="CHEBI:29999"/>
        <dbReference type="ChEBI" id="CHEBI:30616"/>
        <dbReference type="ChEBI" id="CHEBI:33019"/>
        <dbReference type="ChEBI" id="CHEBI:142516"/>
        <dbReference type="EC" id="2.7.7.108"/>
    </reaction>
</comment>
<comment type="catalytic activity">
    <reaction evidence="1">
        <text>L-threonyl-[protein] + ATP = 3-O-(5'-adenylyl)-L-threonyl-[protein] + diphosphate</text>
        <dbReference type="Rhea" id="RHEA:54292"/>
        <dbReference type="Rhea" id="RHEA-COMP:11060"/>
        <dbReference type="Rhea" id="RHEA-COMP:13847"/>
        <dbReference type="ChEBI" id="CHEBI:30013"/>
        <dbReference type="ChEBI" id="CHEBI:30616"/>
        <dbReference type="ChEBI" id="CHEBI:33019"/>
        <dbReference type="ChEBI" id="CHEBI:138113"/>
        <dbReference type="EC" id="2.7.7.108"/>
    </reaction>
</comment>
<comment type="catalytic activity">
    <reaction evidence="1">
        <text>L-tyrosyl-[protein] + ATP = O-(5'-adenylyl)-L-tyrosyl-[protein] + diphosphate</text>
        <dbReference type="Rhea" id="RHEA:54288"/>
        <dbReference type="Rhea" id="RHEA-COMP:10136"/>
        <dbReference type="Rhea" id="RHEA-COMP:13846"/>
        <dbReference type="ChEBI" id="CHEBI:30616"/>
        <dbReference type="ChEBI" id="CHEBI:33019"/>
        <dbReference type="ChEBI" id="CHEBI:46858"/>
        <dbReference type="ChEBI" id="CHEBI:83624"/>
        <dbReference type="EC" id="2.7.7.108"/>
    </reaction>
</comment>
<comment type="catalytic activity">
    <reaction evidence="1">
        <text>L-histidyl-[protein] + UTP = N(tele)-(5'-uridylyl)-L-histidyl-[protein] + diphosphate</text>
        <dbReference type="Rhea" id="RHEA:83891"/>
        <dbReference type="Rhea" id="RHEA-COMP:9745"/>
        <dbReference type="Rhea" id="RHEA-COMP:20239"/>
        <dbReference type="ChEBI" id="CHEBI:29979"/>
        <dbReference type="ChEBI" id="CHEBI:33019"/>
        <dbReference type="ChEBI" id="CHEBI:46398"/>
        <dbReference type="ChEBI" id="CHEBI:233474"/>
    </reaction>
</comment>
<comment type="catalytic activity">
    <reaction evidence="1">
        <text>L-seryl-[protein] + UTP = O-(5'-uridylyl)-L-seryl-[protein] + diphosphate</text>
        <dbReference type="Rhea" id="RHEA:64604"/>
        <dbReference type="Rhea" id="RHEA-COMP:9863"/>
        <dbReference type="Rhea" id="RHEA-COMP:16635"/>
        <dbReference type="ChEBI" id="CHEBI:29999"/>
        <dbReference type="ChEBI" id="CHEBI:33019"/>
        <dbReference type="ChEBI" id="CHEBI:46398"/>
        <dbReference type="ChEBI" id="CHEBI:156051"/>
    </reaction>
</comment>
<comment type="catalytic activity">
    <reaction evidence="1">
        <text>L-tyrosyl-[protein] + UTP = O-(5'-uridylyl)-L-tyrosyl-[protein] + diphosphate</text>
        <dbReference type="Rhea" id="RHEA:83887"/>
        <dbReference type="Rhea" id="RHEA-COMP:10136"/>
        <dbReference type="Rhea" id="RHEA-COMP:20238"/>
        <dbReference type="ChEBI" id="CHEBI:33019"/>
        <dbReference type="ChEBI" id="CHEBI:46398"/>
        <dbReference type="ChEBI" id="CHEBI:46858"/>
        <dbReference type="ChEBI" id="CHEBI:90602"/>
    </reaction>
</comment>
<comment type="cofactor">
    <cofactor evidence="1">
        <name>Mg(2+)</name>
        <dbReference type="ChEBI" id="CHEBI:18420"/>
    </cofactor>
    <cofactor evidence="1">
        <name>Mn(2+)</name>
        <dbReference type="ChEBI" id="CHEBI:29035"/>
    </cofactor>
</comment>
<comment type="similarity">
    <text evidence="1">Belongs to the SELO family.</text>
</comment>
<protein>
    <recommendedName>
        <fullName evidence="1">Protein nucleotidyltransferase YdiU</fullName>
        <ecNumber evidence="1">2.7.7.-</ecNumber>
    </recommendedName>
    <alternativeName>
        <fullName evidence="1">Protein adenylyltransferase YdiU</fullName>
        <ecNumber evidence="1">2.7.7.108</ecNumber>
    </alternativeName>
    <alternativeName>
        <fullName evidence="1">Protein uridylyltransferase YdiU</fullName>
        <ecNumber evidence="1">2.7.7.-</ecNumber>
    </alternativeName>
</protein>
<feature type="chain" id="PRO_1000132084" description="Protein nucleotidyltransferase YdiU">
    <location>
        <begin position="1"/>
        <end position="480"/>
    </location>
</feature>
<feature type="active site" description="Proton acceptor" evidence="1">
    <location>
        <position position="249"/>
    </location>
</feature>
<feature type="binding site" evidence="1">
    <location>
        <position position="87"/>
    </location>
    <ligand>
        <name>ATP</name>
        <dbReference type="ChEBI" id="CHEBI:30616"/>
    </ligand>
</feature>
<feature type="binding site" evidence="1">
    <location>
        <position position="89"/>
    </location>
    <ligand>
        <name>ATP</name>
        <dbReference type="ChEBI" id="CHEBI:30616"/>
    </ligand>
</feature>
<feature type="binding site" evidence="1">
    <location>
        <position position="90"/>
    </location>
    <ligand>
        <name>ATP</name>
        <dbReference type="ChEBI" id="CHEBI:30616"/>
    </ligand>
</feature>
<feature type="binding site" evidence="1">
    <location>
        <position position="110"/>
    </location>
    <ligand>
        <name>ATP</name>
        <dbReference type="ChEBI" id="CHEBI:30616"/>
    </ligand>
</feature>
<feature type="binding site" evidence="1">
    <location>
        <position position="122"/>
    </location>
    <ligand>
        <name>ATP</name>
        <dbReference type="ChEBI" id="CHEBI:30616"/>
    </ligand>
</feature>
<feature type="binding site" evidence="1">
    <location>
        <position position="123"/>
    </location>
    <ligand>
        <name>ATP</name>
        <dbReference type="ChEBI" id="CHEBI:30616"/>
    </ligand>
</feature>
<feature type="binding site" evidence="1">
    <location>
        <position position="173"/>
    </location>
    <ligand>
        <name>ATP</name>
        <dbReference type="ChEBI" id="CHEBI:30616"/>
    </ligand>
</feature>
<feature type="binding site" evidence="1">
    <location>
        <position position="180"/>
    </location>
    <ligand>
        <name>ATP</name>
        <dbReference type="ChEBI" id="CHEBI:30616"/>
    </ligand>
</feature>
<feature type="binding site" evidence="1">
    <location>
        <position position="250"/>
    </location>
    <ligand>
        <name>Mg(2+)</name>
        <dbReference type="ChEBI" id="CHEBI:18420"/>
    </ligand>
</feature>
<feature type="binding site" evidence="1">
    <location>
        <position position="259"/>
    </location>
    <ligand>
        <name>ATP</name>
        <dbReference type="ChEBI" id="CHEBI:30616"/>
    </ligand>
</feature>
<feature type="binding site" evidence="1">
    <location>
        <position position="259"/>
    </location>
    <ligand>
        <name>Mg(2+)</name>
        <dbReference type="ChEBI" id="CHEBI:18420"/>
    </ligand>
</feature>
<evidence type="ECO:0000255" key="1">
    <source>
        <dbReference type="HAMAP-Rule" id="MF_00692"/>
    </source>
</evidence>
<proteinExistence type="inferred from homology"/>
<name>SELO_ANOFW</name>
<gene>
    <name evidence="1" type="primary">ydiU</name>
    <name evidence="1" type="synonym">selO</name>
    <name type="ordered locus">Aflv_0334</name>
</gene>
<sequence length="480" mass="54619">MNANWNFDNSYARLPERFFTRIYPTPVSDPKLVVLNHSLAKELGLNAEVLASEEGVAVFAGNRVPEGAEPLAQAYAGHQFGYFNMLGDGRAILLGEHVTPSGERVDIQLKGSGRTPYSRGGDGRAALGPMLREYIISEAMHALGIPTTRSLAVVTTGEVVMRETELPGAILTRVAASHLRVGTFQYAGRFLSKEELQALADYAIKRHYPNGEHASNRYVFLLEEVMKKQAALVAKWQLVGFIHGVMNTDNMTISGETIDYGPCAFMDVYDPETVFSSIDTQGRYAYGNQPYIAGWNIARFAESLLPLLHDEEEKAIEIAQKVIEQFPALYETYWLQGMRAKLGLWTEEAEDKKLIGELLHLMYTHRLDYTNTFRSLTLEEWHFCEQELRDWYTRWQQRIARQDMTKEEVYECMRQNNPAIIPRNYRVEEALAAAVEHGDDTVMERLLHVLSDPYAYMEEQEEYAKTPEPSDRPYRTFCGT</sequence>
<reference key="1">
    <citation type="journal article" date="2008" name="Genome Biol.">
        <title>Encapsulated in silica: genome, proteome and physiology of the thermophilic bacterium Anoxybacillus flavithermus WK1.</title>
        <authorList>
            <person name="Saw J.H."/>
            <person name="Mountain B.W."/>
            <person name="Feng L."/>
            <person name="Omelchenko M.V."/>
            <person name="Hou S."/>
            <person name="Saito J.A."/>
            <person name="Stott M.B."/>
            <person name="Li D."/>
            <person name="Zhao G."/>
            <person name="Wu J."/>
            <person name="Galperin M.Y."/>
            <person name="Koonin E.V."/>
            <person name="Makarova K.S."/>
            <person name="Wolf Y.I."/>
            <person name="Rigden D.J."/>
            <person name="Dunfield P.F."/>
            <person name="Wang L."/>
            <person name="Alam M."/>
        </authorList>
    </citation>
    <scope>NUCLEOTIDE SEQUENCE [LARGE SCALE GENOMIC DNA]</scope>
    <source>
        <strain>DSM 21510 / WK1</strain>
    </source>
</reference>